<gene>
    <name type="primary">OR5M1</name>
</gene>
<sequence>MFSPNHTIVTEFILLGLTDDPVLEKILFGVFLAIYLITLAGNLCMILLIRTNSHLQTPMYFFLGHLSFVDICYSSNVTPNMLHNFLSEQKTISYAGCFTQCLLFIALVITEFYILASMALDRYVAICSPLHYSSRMSKNICVCLVTIPYMYGFLSGFSQSLLTFHLSFCGSLEINHFYCADPPLIMLACSDTRVKKMAMFVVAGFNLSSSLFIILLSYLFIFAAIFRIRSAEGRHKAFSTCASHLTIVTLFYGTLFCMYVRPPSEKSVEESKITAVFYTFLSPMLNPLIYSLRNTDVILAMQQMIRGKSFHKIAV</sequence>
<protein>
    <recommendedName>
        <fullName>Olfactory receptor 5M1</fullName>
    </recommendedName>
    <alternativeName>
        <fullName>OST050</fullName>
    </alternativeName>
    <alternativeName>
        <fullName>Olfactory receptor OR11-208</fullName>
    </alternativeName>
</protein>
<reference key="1">
    <citation type="submission" date="2001-07" db="EMBL/GenBank/DDBJ databases">
        <title>Genome-wide discovery and analysis of human seven transmembrane helix receptor genes.</title>
        <authorList>
            <person name="Suwa M."/>
            <person name="Sato T."/>
            <person name="Okouchi I."/>
            <person name="Arita M."/>
            <person name="Futami K."/>
            <person name="Matsumoto S."/>
            <person name="Tsutsumi S."/>
            <person name="Aburatani H."/>
            <person name="Asai K."/>
            <person name="Akiyama Y."/>
        </authorList>
    </citation>
    <scope>NUCLEOTIDE SEQUENCE [GENOMIC DNA]</scope>
</reference>
<reference key="2">
    <citation type="journal article" date="2002" name="Genomics">
        <title>DEFOG: a practical scheme for deciphering families of genes.</title>
        <authorList>
            <person name="Fuchs T."/>
            <person name="Malecova B."/>
            <person name="Linhart C."/>
            <person name="Sharan R."/>
            <person name="Khen M."/>
            <person name="Herwig R."/>
            <person name="Shmulevich D."/>
            <person name="Elkon R."/>
            <person name="Steinfath M."/>
            <person name="O'Brien J.K."/>
            <person name="Radelof U."/>
            <person name="Lehrach H."/>
            <person name="Lancet D."/>
            <person name="Shamir R."/>
        </authorList>
    </citation>
    <scope>NUCLEOTIDE SEQUENCE [GENOMIC DNA] OF 68-283</scope>
</reference>
<reference key="3">
    <citation type="journal article" date="2004" name="Proc. Natl. Acad. Sci. U.S.A.">
        <title>The human olfactory receptor gene family.</title>
        <authorList>
            <person name="Malnic B."/>
            <person name="Godfrey P.A."/>
            <person name="Buck L.B."/>
        </authorList>
    </citation>
    <scope>IDENTIFICATION</scope>
</reference>
<reference key="4">
    <citation type="journal article" date="2004" name="Proc. Natl. Acad. Sci. U.S.A.">
        <authorList>
            <person name="Malnic B."/>
            <person name="Godfrey P.A."/>
            <person name="Buck L.B."/>
        </authorList>
    </citation>
    <scope>ERRATUM OF PUBMED:14983052</scope>
</reference>
<feature type="chain" id="PRO_0000150604" description="Olfactory receptor 5M1">
    <location>
        <begin position="1"/>
        <end position="315"/>
    </location>
</feature>
<feature type="topological domain" description="Extracellular" evidence="1">
    <location>
        <begin position="1"/>
        <end position="25"/>
    </location>
</feature>
<feature type="transmembrane region" description="Helical; Name=1" evidence="1">
    <location>
        <begin position="26"/>
        <end position="46"/>
    </location>
</feature>
<feature type="topological domain" description="Cytoplasmic" evidence="1">
    <location>
        <begin position="47"/>
        <end position="54"/>
    </location>
</feature>
<feature type="transmembrane region" description="Helical; Name=2" evidence="1">
    <location>
        <begin position="55"/>
        <end position="75"/>
    </location>
</feature>
<feature type="topological domain" description="Extracellular" evidence="1">
    <location>
        <begin position="76"/>
        <end position="99"/>
    </location>
</feature>
<feature type="transmembrane region" description="Helical; Name=3" evidence="1">
    <location>
        <begin position="100"/>
        <end position="120"/>
    </location>
</feature>
<feature type="topological domain" description="Cytoplasmic" evidence="1">
    <location>
        <begin position="121"/>
        <end position="139"/>
    </location>
</feature>
<feature type="transmembrane region" description="Helical; Name=4" evidence="1">
    <location>
        <begin position="140"/>
        <end position="160"/>
    </location>
</feature>
<feature type="topological domain" description="Extracellular" evidence="1">
    <location>
        <begin position="161"/>
        <end position="196"/>
    </location>
</feature>
<feature type="transmembrane region" description="Helical; Name=5" evidence="1">
    <location>
        <begin position="197"/>
        <end position="217"/>
    </location>
</feature>
<feature type="topological domain" description="Cytoplasmic" evidence="1">
    <location>
        <begin position="218"/>
        <end position="237"/>
    </location>
</feature>
<feature type="transmembrane region" description="Helical; Name=6" evidence="1">
    <location>
        <begin position="238"/>
        <end position="258"/>
    </location>
</feature>
<feature type="topological domain" description="Extracellular" evidence="1">
    <location>
        <begin position="259"/>
        <end position="271"/>
    </location>
</feature>
<feature type="transmembrane region" description="Helical; Name=7" evidence="1">
    <location>
        <begin position="272"/>
        <end position="292"/>
    </location>
</feature>
<feature type="topological domain" description="Cytoplasmic" evidence="1">
    <location>
        <begin position="293"/>
        <end position="315"/>
    </location>
</feature>
<feature type="glycosylation site" description="N-linked (GlcNAc...) asparagine" evidence="1">
    <location>
        <position position="5"/>
    </location>
</feature>
<feature type="disulfide bond" evidence="2">
    <location>
        <begin position="97"/>
        <end position="189"/>
    </location>
</feature>
<feature type="sequence variant" id="VAR_060010" description="In dbSNP:rs4939078.">
    <original>S</original>
    <variation>T</variation>
    <location>
        <position position="282"/>
    </location>
</feature>
<proteinExistence type="inferred from homology"/>
<comment type="function">
    <text evidence="3">Odorant receptor.</text>
</comment>
<comment type="subcellular location">
    <subcellularLocation>
        <location>Cell membrane</location>
        <topology>Multi-pass membrane protein</topology>
    </subcellularLocation>
</comment>
<comment type="similarity">
    <text evidence="2">Belongs to the G-protein coupled receptor 1 family.</text>
</comment>
<comment type="online information" name="Human Olfactory Receptor Data Exploratorium (HORDE)">
    <link uri="http://genome.weizmann.ac.il/horde/card/index/symbol:OR5M1"/>
</comment>
<dbReference type="EMBL" id="AB065742">
    <property type="protein sequence ID" value="BAC05962.1"/>
    <property type="molecule type" value="Genomic_DNA"/>
</dbReference>
<dbReference type="EMBL" id="AF399522">
    <property type="protein sequence ID" value="AAK95007.1"/>
    <property type="molecule type" value="Genomic_DNA"/>
</dbReference>
<dbReference type="EMBL" id="BK004402">
    <property type="protein sequence ID" value="DAA04800.1"/>
    <property type="molecule type" value="Genomic_DNA"/>
</dbReference>
<dbReference type="CCDS" id="CCDS53631.1"/>
<dbReference type="RefSeq" id="NP_001004740.1">
    <property type="nucleotide sequence ID" value="NM_001004740.2"/>
</dbReference>
<dbReference type="SMR" id="Q8NGP8"/>
<dbReference type="FunCoup" id="Q8NGP8">
    <property type="interactions" value="417"/>
</dbReference>
<dbReference type="STRING" id="9606.ENSP00000493124"/>
<dbReference type="GlyCosmos" id="Q8NGP8">
    <property type="glycosylation" value="1 site, No reported glycans"/>
</dbReference>
<dbReference type="GlyGen" id="Q8NGP8">
    <property type="glycosylation" value="1 site"/>
</dbReference>
<dbReference type="iPTMnet" id="Q8NGP8"/>
<dbReference type="PhosphoSitePlus" id="Q8NGP8"/>
<dbReference type="BioMuta" id="OR5M1"/>
<dbReference type="DMDM" id="38372744"/>
<dbReference type="MassIVE" id="Q8NGP8"/>
<dbReference type="PaxDb" id="9606-ENSP00000435416"/>
<dbReference type="Antibodypedia" id="58994">
    <property type="antibodies" value="102 antibodies from 20 providers"/>
</dbReference>
<dbReference type="DNASU" id="390168"/>
<dbReference type="Ensembl" id="ENST00000641076.1">
    <property type="protein sequence ID" value="ENSP00000493124.1"/>
    <property type="gene ID" value="ENSG00000255012.3"/>
</dbReference>
<dbReference type="GeneID" id="390168"/>
<dbReference type="KEGG" id="hsa:390168"/>
<dbReference type="MANE-Select" id="ENST00000641076.1">
    <property type="protein sequence ID" value="ENSP00000493124.1"/>
    <property type="RefSeq nucleotide sequence ID" value="NM_001004740.2"/>
    <property type="RefSeq protein sequence ID" value="NP_001004740.1"/>
</dbReference>
<dbReference type="UCSC" id="uc001nja.1">
    <property type="organism name" value="human"/>
</dbReference>
<dbReference type="AGR" id="HGNC:8352"/>
<dbReference type="CTD" id="390168"/>
<dbReference type="GeneCards" id="OR5M1"/>
<dbReference type="HGNC" id="HGNC:8352">
    <property type="gene designation" value="OR5M1"/>
</dbReference>
<dbReference type="HPA" id="ENSG00000255012">
    <property type="expression patterns" value="Not detected"/>
</dbReference>
<dbReference type="neXtProt" id="NX_Q8NGP8"/>
<dbReference type="PharmGKB" id="PA32546"/>
<dbReference type="VEuPathDB" id="HostDB:ENSG00000255012"/>
<dbReference type="eggNOG" id="ENOG502TDE6">
    <property type="taxonomic scope" value="Eukaryota"/>
</dbReference>
<dbReference type="GeneTree" id="ENSGT01120000271889"/>
<dbReference type="HOGENOM" id="CLU_012526_1_0_1"/>
<dbReference type="InParanoid" id="Q8NGP8"/>
<dbReference type="OMA" id="LYYSTRM"/>
<dbReference type="OrthoDB" id="9518048at2759"/>
<dbReference type="PAN-GO" id="Q8NGP8">
    <property type="GO annotations" value="4 GO annotations based on evolutionary models"/>
</dbReference>
<dbReference type="PhylomeDB" id="Q8NGP8"/>
<dbReference type="TreeFam" id="TF352751"/>
<dbReference type="PathwayCommons" id="Q8NGP8"/>
<dbReference type="Reactome" id="R-HSA-9752946">
    <property type="pathway name" value="Expression and translocation of olfactory receptors"/>
</dbReference>
<dbReference type="BioGRID-ORCS" id="390168">
    <property type="hits" value="13 hits in 637 CRISPR screens"/>
</dbReference>
<dbReference type="GeneWiki" id="OR5M1"/>
<dbReference type="GenomeRNAi" id="390168"/>
<dbReference type="Pharos" id="Q8NGP8">
    <property type="development level" value="Tdark"/>
</dbReference>
<dbReference type="PRO" id="PR:Q8NGP8"/>
<dbReference type="Proteomes" id="UP000005640">
    <property type="component" value="Chromosome 11"/>
</dbReference>
<dbReference type="RNAct" id="Q8NGP8">
    <property type="molecule type" value="protein"/>
</dbReference>
<dbReference type="Bgee" id="ENSG00000255012">
    <property type="expression patterns" value="Expressed in male germ line stem cell (sensu Vertebrata) in testis"/>
</dbReference>
<dbReference type="ExpressionAtlas" id="Q8NGP8">
    <property type="expression patterns" value="baseline and differential"/>
</dbReference>
<dbReference type="GO" id="GO:0005886">
    <property type="term" value="C:plasma membrane"/>
    <property type="evidence" value="ECO:0007669"/>
    <property type="project" value="UniProtKB-SubCell"/>
</dbReference>
<dbReference type="GO" id="GO:0004930">
    <property type="term" value="F:G protein-coupled receptor activity"/>
    <property type="evidence" value="ECO:0007669"/>
    <property type="project" value="UniProtKB-KW"/>
</dbReference>
<dbReference type="GO" id="GO:0005549">
    <property type="term" value="F:odorant binding"/>
    <property type="evidence" value="ECO:0000318"/>
    <property type="project" value="GO_Central"/>
</dbReference>
<dbReference type="GO" id="GO:0004984">
    <property type="term" value="F:olfactory receptor activity"/>
    <property type="evidence" value="ECO:0000318"/>
    <property type="project" value="GO_Central"/>
</dbReference>
<dbReference type="GO" id="GO:0007186">
    <property type="term" value="P:G protein-coupled receptor signaling pathway"/>
    <property type="evidence" value="ECO:0000318"/>
    <property type="project" value="GO_Central"/>
</dbReference>
<dbReference type="GO" id="GO:0007608">
    <property type="term" value="P:sensory perception of smell"/>
    <property type="evidence" value="ECO:0000318"/>
    <property type="project" value="GO_Central"/>
</dbReference>
<dbReference type="CDD" id="cd15412">
    <property type="entry name" value="7tmA_OR5M-like"/>
    <property type="match status" value="1"/>
</dbReference>
<dbReference type="FunFam" id="1.10.1220.70:FF:000001">
    <property type="entry name" value="Olfactory receptor"/>
    <property type="match status" value="1"/>
</dbReference>
<dbReference type="FunFam" id="1.20.1070.10:FF:000003">
    <property type="entry name" value="Olfactory receptor"/>
    <property type="match status" value="1"/>
</dbReference>
<dbReference type="Gene3D" id="1.20.1070.10">
    <property type="entry name" value="Rhodopsin 7-helix transmembrane proteins"/>
    <property type="match status" value="1"/>
</dbReference>
<dbReference type="InterPro" id="IPR000276">
    <property type="entry name" value="GPCR_Rhodpsn"/>
</dbReference>
<dbReference type="InterPro" id="IPR017452">
    <property type="entry name" value="GPCR_Rhodpsn_7TM"/>
</dbReference>
<dbReference type="InterPro" id="IPR000725">
    <property type="entry name" value="Olfact_rcpt"/>
</dbReference>
<dbReference type="PANTHER" id="PTHR48018">
    <property type="entry name" value="OLFACTORY RECEPTOR"/>
    <property type="match status" value="1"/>
</dbReference>
<dbReference type="Pfam" id="PF13853">
    <property type="entry name" value="7tm_4"/>
    <property type="match status" value="1"/>
</dbReference>
<dbReference type="PRINTS" id="PR00237">
    <property type="entry name" value="GPCRRHODOPSN"/>
</dbReference>
<dbReference type="PRINTS" id="PR00245">
    <property type="entry name" value="OLFACTORYR"/>
</dbReference>
<dbReference type="SUPFAM" id="SSF81321">
    <property type="entry name" value="Family A G protein-coupled receptor-like"/>
    <property type="match status" value="1"/>
</dbReference>
<dbReference type="PROSITE" id="PS00237">
    <property type="entry name" value="G_PROTEIN_RECEP_F1_1"/>
    <property type="match status" value="1"/>
</dbReference>
<dbReference type="PROSITE" id="PS50262">
    <property type="entry name" value="G_PROTEIN_RECEP_F1_2"/>
    <property type="match status" value="1"/>
</dbReference>
<accession>Q8NGP8</accession>
<accession>Q6IF60</accession>
<accession>Q96RB6</accession>
<evidence type="ECO:0000255" key="1"/>
<evidence type="ECO:0000255" key="2">
    <source>
        <dbReference type="PROSITE-ProRule" id="PRU00521"/>
    </source>
</evidence>
<evidence type="ECO:0000305" key="3"/>
<organism>
    <name type="scientific">Homo sapiens</name>
    <name type="common">Human</name>
    <dbReference type="NCBI Taxonomy" id="9606"/>
    <lineage>
        <taxon>Eukaryota</taxon>
        <taxon>Metazoa</taxon>
        <taxon>Chordata</taxon>
        <taxon>Craniata</taxon>
        <taxon>Vertebrata</taxon>
        <taxon>Euteleostomi</taxon>
        <taxon>Mammalia</taxon>
        <taxon>Eutheria</taxon>
        <taxon>Euarchontoglires</taxon>
        <taxon>Primates</taxon>
        <taxon>Haplorrhini</taxon>
        <taxon>Catarrhini</taxon>
        <taxon>Hominidae</taxon>
        <taxon>Homo</taxon>
    </lineage>
</organism>
<keyword id="KW-1003">Cell membrane</keyword>
<keyword id="KW-1015">Disulfide bond</keyword>
<keyword id="KW-0297">G-protein coupled receptor</keyword>
<keyword id="KW-0325">Glycoprotein</keyword>
<keyword id="KW-0472">Membrane</keyword>
<keyword id="KW-0552">Olfaction</keyword>
<keyword id="KW-0675">Receptor</keyword>
<keyword id="KW-1185">Reference proteome</keyword>
<keyword id="KW-0716">Sensory transduction</keyword>
<keyword id="KW-0807">Transducer</keyword>
<keyword id="KW-0812">Transmembrane</keyword>
<keyword id="KW-1133">Transmembrane helix</keyword>
<name>OR5M1_HUMAN</name>